<proteinExistence type="inferred from homology"/>
<dbReference type="EC" id="3.1.3.25" evidence="2"/>
<dbReference type="EMBL" id="AE005174">
    <property type="status" value="NOT_ANNOTATED_CDS"/>
    <property type="molecule type" value="Genomic_DNA"/>
</dbReference>
<dbReference type="EMBL" id="BA000007">
    <property type="protein sequence ID" value="BAB36822.1"/>
    <property type="molecule type" value="Genomic_DNA"/>
</dbReference>
<dbReference type="PIR" id="G91053">
    <property type="entry name" value="G91053"/>
</dbReference>
<dbReference type="RefSeq" id="NP_311426.1">
    <property type="nucleotide sequence ID" value="NC_002695.1"/>
</dbReference>
<dbReference type="RefSeq" id="WP_000553451.1">
    <property type="nucleotide sequence ID" value="NZ_VOAI01000001.1"/>
</dbReference>
<dbReference type="SMR" id="P0ADG6"/>
<dbReference type="STRING" id="386585.gene:10366449"/>
<dbReference type="GeneID" id="75206226"/>
<dbReference type="GeneID" id="915157"/>
<dbReference type="KEGG" id="ecs:ECs_3399"/>
<dbReference type="PATRIC" id="fig|386585.9.peg.3551"/>
<dbReference type="eggNOG" id="COG0483">
    <property type="taxonomic scope" value="Bacteria"/>
</dbReference>
<dbReference type="HOGENOM" id="CLU_044118_0_4_6"/>
<dbReference type="OMA" id="ERGLHPW"/>
<dbReference type="Proteomes" id="UP000000558">
    <property type="component" value="Chromosome"/>
</dbReference>
<dbReference type="Proteomes" id="UP000002519">
    <property type="component" value="Chromosome"/>
</dbReference>
<dbReference type="GO" id="GO:0005737">
    <property type="term" value="C:cytoplasm"/>
    <property type="evidence" value="ECO:0007669"/>
    <property type="project" value="UniProtKB-SubCell"/>
</dbReference>
<dbReference type="GO" id="GO:0008934">
    <property type="term" value="F:inositol monophosphate 1-phosphatase activity"/>
    <property type="evidence" value="ECO:0007669"/>
    <property type="project" value="InterPro"/>
</dbReference>
<dbReference type="GO" id="GO:0046872">
    <property type="term" value="F:metal ion binding"/>
    <property type="evidence" value="ECO:0007669"/>
    <property type="project" value="UniProtKB-KW"/>
</dbReference>
<dbReference type="GO" id="GO:0003723">
    <property type="term" value="F:RNA binding"/>
    <property type="evidence" value="ECO:0007669"/>
    <property type="project" value="UniProtKB-KW"/>
</dbReference>
<dbReference type="GO" id="GO:0006020">
    <property type="term" value="P:inositol metabolic process"/>
    <property type="evidence" value="ECO:0007669"/>
    <property type="project" value="TreeGrafter"/>
</dbReference>
<dbReference type="GO" id="GO:0046854">
    <property type="term" value="P:phosphatidylinositol phosphate biosynthetic process"/>
    <property type="evidence" value="ECO:0007669"/>
    <property type="project" value="InterPro"/>
</dbReference>
<dbReference type="GO" id="GO:0042254">
    <property type="term" value="P:ribosome biogenesis"/>
    <property type="evidence" value="ECO:0007669"/>
    <property type="project" value="UniProtKB-KW"/>
</dbReference>
<dbReference type="GO" id="GO:0007165">
    <property type="term" value="P:signal transduction"/>
    <property type="evidence" value="ECO:0007669"/>
    <property type="project" value="TreeGrafter"/>
</dbReference>
<dbReference type="GO" id="GO:0031564">
    <property type="term" value="P:transcription antitermination"/>
    <property type="evidence" value="ECO:0007669"/>
    <property type="project" value="UniProtKB-KW"/>
</dbReference>
<dbReference type="CDD" id="cd01639">
    <property type="entry name" value="IMPase"/>
    <property type="match status" value="1"/>
</dbReference>
<dbReference type="FunFam" id="3.30.540.10:FF:000003">
    <property type="entry name" value="Inositol-1-monophosphatase"/>
    <property type="match status" value="1"/>
</dbReference>
<dbReference type="FunFam" id="3.40.190.80:FF:000004">
    <property type="entry name" value="Inositol-1-monophosphatase"/>
    <property type="match status" value="1"/>
</dbReference>
<dbReference type="Gene3D" id="3.40.190.80">
    <property type="match status" value="1"/>
</dbReference>
<dbReference type="Gene3D" id="3.30.540.10">
    <property type="entry name" value="Fructose-1,6-Bisphosphatase, subunit A, domain 1"/>
    <property type="match status" value="1"/>
</dbReference>
<dbReference type="InterPro" id="IPR033942">
    <property type="entry name" value="IMPase"/>
</dbReference>
<dbReference type="InterPro" id="IPR020583">
    <property type="entry name" value="Inositol_monoP_metal-BS"/>
</dbReference>
<dbReference type="InterPro" id="IPR000760">
    <property type="entry name" value="Inositol_monophosphatase-like"/>
</dbReference>
<dbReference type="InterPro" id="IPR020550">
    <property type="entry name" value="Inositol_monophosphatase_CS"/>
</dbReference>
<dbReference type="InterPro" id="IPR022337">
    <property type="entry name" value="Inositol_monophosphatase_SuhB"/>
</dbReference>
<dbReference type="NCBIfam" id="NF008027">
    <property type="entry name" value="PRK10757.1"/>
    <property type="match status" value="1"/>
</dbReference>
<dbReference type="PANTHER" id="PTHR20854">
    <property type="entry name" value="INOSITOL MONOPHOSPHATASE"/>
    <property type="match status" value="1"/>
</dbReference>
<dbReference type="PANTHER" id="PTHR20854:SF4">
    <property type="entry name" value="INOSITOL-1-MONOPHOSPHATASE-RELATED"/>
    <property type="match status" value="1"/>
</dbReference>
<dbReference type="Pfam" id="PF00459">
    <property type="entry name" value="Inositol_P"/>
    <property type="match status" value="1"/>
</dbReference>
<dbReference type="PRINTS" id="PR00377">
    <property type="entry name" value="IMPHPHTASES"/>
</dbReference>
<dbReference type="PRINTS" id="PR01959">
    <property type="entry name" value="SBIMPHPHTASE"/>
</dbReference>
<dbReference type="SUPFAM" id="SSF56655">
    <property type="entry name" value="Carbohydrate phosphatase"/>
    <property type="match status" value="1"/>
</dbReference>
<dbReference type="PROSITE" id="PS00629">
    <property type="entry name" value="IMP_1"/>
    <property type="match status" value="1"/>
</dbReference>
<dbReference type="PROSITE" id="PS00630">
    <property type="entry name" value="IMP_2"/>
    <property type="match status" value="1"/>
</dbReference>
<feature type="chain" id="PRO_0000142560" description="Nus factor SuhB">
    <location>
        <begin position="1"/>
        <end position="267"/>
    </location>
</feature>
<feature type="binding site" evidence="2">
    <location>
        <position position="67"/>
    </location>
    <ligand>
        <name>Mg(2+)</name>
        <dbReference type="ChEBI" id="CHEBI:18420"/>
    </ligand>
</feature>
<feature type="binding site" evidence="1">
    <location>
        <position position="67"/>
    </location>
    <ligand>
        <name>substrate</name>
    </ligand>
</feature>
<feature type="binding site" evidence="2">
    <location>
        <position position="84"/>
    </location>
    <ligand>
        <name>Mg(2+)</name>
        <dbReference type="ChEBI" id="CHEBI:18420"/>
    </ligand>
</feature>
<feature type="binding site" evidence="1">
    <location>
        <begin position="86"/>
        <end position="89"/>
    </location>
    <ligand>
        <name>substrate</name>
    </ligand>
</feature>
<feature type="binding site" evidence="2">
    <location>
        <position position="86"/>
    </location>
    <ligand>
        <name>Mg(2+)</name>
        <dbReference type="ChEBI" id="CHEBI:18420"/>
    </ligand>
</feature>
<feature type="binding site" evidence="1">
    <location>
        <position position="183"/>
    </location>
    <ligand>
        <name>substrate</name>
    </ligand>
</feature>
<feature type="binding site" evidence="1">
    <location>
        <position position="212"/>
    </location>
    <ligand>
        <name>substrate</name>
    </ligand>
</feature>
<reference key="1">
    <citation type="journal article" date="2001" name="Nature">
        <title>Genome sequence of enterohaemorrhagic Escherichia coli O157:H7.</title>
        <authorList>
            <person name="Perna N.T."/>
            <person name="Plunkett G. III"/>
            <person name="Burland V."/>
            <person name="Mau B."/>
            <person name="Glasner J.D."/>
            <person name="Rose D.J."/>
            <person name="Mayhew G.F."/>
            <person name="Evans P.S."/>
            <person name="Gregor J."/>
            <person name="Kirkpatrick H.A."/>
            <person name="Posfai G."/>
            <person name="Hackett J."/>
            <person name="Klink S."/>
            <person name="Boutin A."/>
            <person name="Shao Y."/>
            <person name="Miller L."/>
            <person name="Grotbeck E.J."/>
            <person name="Davis N.W."/>
            <person name="Lim A."/>
            <person name="Dimalanta E.T."/>
            <person name="Potamousis K."/>
            <person name="Apodaca J."/>
            <person name="Anantharaman T.S."/>
            <person name="Lin J."/>
            <person name="Yen G."/>
            <person name="Schwartz D.C."/>
            <person name="Welch R.A."/>
            <person name="Blattner F.R."/>
        </authorList>
    </citation>
    <scope>NUCLEOTIDE SEQUENCE [LARGE SCALE GENOMIC DNA]</scope>
    <source>
        <strain>O157:H7 / EDL933 / ATCC 700927 / EHEC</strain>
    </source>
</reference>
<reference key="2">
    <citation type="journal article" date="2001" name="DNA Res.">
        <title>Complete genome sequence of enterohemorrhagic Escherichia coli O157:H7 and genomic comparison with a laboratory strain K-12.</title>
        <authorList>
            <person name="Hayashi T."/>
            <person name="Makino K."/>
            <person name="Ohnishi M."/>
            <person name="Kurokawa K."/>
            <person name="Ishii K."/>
            <person name="Yokoyama K."/>
            <person name="Han C.-G."/>
            <person name="Ohtsubo E."/>
            <person name="Nakayama K."/>
            <person name="Murata T."/>
            <person name="Tanaka M."/>
            <person name="Tobe T."/>
            <person name="Iida T."/>
            <person name="Takami H."/>
            <person name="Honda T."/>
            <person name="Sasakawa C."/>
            <person name="Ogasawara N."/>
            <person name="Yasunaga T."/>
            <person name="Kuhara S."/>
            <person name="Shiba T."/>
            <person name="Hattori M."/>
            <person name="Shinagawa H."/>
        </authorList>
    </citation>
    <scope>NUCLEOTIDE SEQUENCE [LARGE SCALE GENOMIC DNA]</scope>
    <source>
        <strain>O157:H7 / Sakai / RIMD 0509952 / EHEC</strain>
    </source>
</reference>
<evidence type="ECO:0000250" key="1"/>
<evidence type="ECO:0000250" key="2">
    <source>
        <dbReference type="UniProtKB" id="P0ADG4"/>
    </source>
</evidence>
<evidence type="ECO:0000305" key="3"/>
<organism>
    <name type="scientific">Escherichia coli O157:H7</name>
    <dbReference type="NCBI Taxonomy" id="83334"/>
    <lineage>
        <taxon>Bacteria</taxon>
        <taxon>Pseudomonadati</taxon>
        <taxon>Pseudomonadota</taxon>
        <taxon>Gammaproteobacteria</taxon>
        <taxon>Enterobacterales</taxon>
        <taxon>Enterobacteriaceae</taxon>
        <taxon>Escherichia</taxon>
    </lineage>
</organism>
<keyword id="KW-0143">Chaperone</keyword>
<keyword id="KW-0963">Cytoplasm</keyword>
<keyword id="KW-0378">Hydrolase</keyword>
<keyword id="KW-0460">Magnesium</keyword>
<keyword id="KW-0479">Metal-binding</keyword>
<keyword id="KW-1185">Reference proteome</keyword>
<keyword id="KW-0690">Ribosome biogenesis</keyword>
<keyword id="KW-0694">RNA-binding</keyword>
<keyword id="KW-0804">Transcription</keyword>
<keyword id="KW-0889">Transcription antitermination</keyword>
<keyword id="KW-0805">Transcription regulation</keyword>
<accession>P0ADG6</accession>
<accession>P22783</accession>
<accession>P77511</accession>
<accession>Q8X2E6</accession>
<comment type="function">
    <text evidence="2">Part of the processive rRNA transcription and antitermination complex (rrnTAC). The complex forms an RNA-chaperone ring around the RNA exit tunnel of RNA polymerase (RNAP). It supports rapid transcription and antitermination of rRNA operons, cotranscriptional rRNA folding, and annealing of distal rRNA regions to allow correct ribosome biogenesis. This subunit may play a central role in organizing the structure. IMPase activity is not required for its Nus factor function.</text>
</comment>
<comment type="catalytic activity">
    <reaction evidence="2">
        <text>a myo-inositol phosphate + H2O = myo-inositol + phosphate</text>
        <dbReference type="Rhea" id="RHEA:24056"/>
        <dbReference type="ChEBI" id="CHEBI:15377"/>
        <dbReference type="ChEBI" id="CHEBI:17268"/>
        <dbReference type="ChEBI" id="CHEBI:43474"/>
        <dbReference type="ChEBI" id="CHEBI:84139"/>
        <dbReference type="EC" id="3.1.3.25"/>
    </reaction>
</comment>
<comment type="cofactor">
    <cofactor evidence="2">
        <name>Mg(2+)</name>
        <dbReference type="ChEBI" id="CHEBI:18420"/>
    </cofactor>
</comment>
<comment type="subunit">
    <text evidence="2">Homodimer. The rRNA transcription and antitermination complex (rrnTAC) consists of RNA polymerase (RNAP), NusA, NusB, NusE (rpsJ), NusG, SubB, ribosomal protein S4, DNA and precursor rRNA; S4 is more flexible than other subunits.</text>
</comment>
<comment type="subcellular location">
    <subcellularLocation>
        <location evidence="2">Cytoplasm</location>
    </subcellularLocation>
</comment>
<comment type="miscellaneous">
    <text evidence="2">E.coli makes very low amounts of myo-inositol-containing phospholipids, so the catalytic necessity for this enzyme is low.</text>
</comment>
<comment type="similarity">
    <text evidence="3">Belongs to the inositol monophosphatase superfamily.</text>
</comment>
<protein>
    <recommendedName>
        <fullName evidence="2">Nus factor SuhB</fullName>
    </recommendedName>
    <alternativeName>
        <fullName>Inositol-1-monophosphatase</fullName>
        <shortName>I-1-Pase</shortName>
        <shortName>IMPase</shortName>
        <shortName>Inositol-1-phosphatase</shortName>
        <ecNumber evidence="2">3.1.3.25</ecNumber>
    </alternativeName>
</protein>
<sequence>MHPMLNIAVRAARKAGNLIAKNYETPDAVEASQKGSNDFVTNVDKAAEAVIIDTIRKSYPQHTIITEESGELEGTDQDVQWVIDPLDGTTNFIKRLPHFAVSIAVRIKGRTEVAVVYDPMRNELFTATRGQGAQLNGYRLRGSTARDLDGTILATGFPFKAKQYATTYINIVGKLFNECADFRRTGSAALDLAYVAAGRVDGFFEIGLRPWDFAAGELLVREAGGIVSDFTGGHNYMLTGNIVAGNPRVVKAMLANMRDELSDALKR</sequence>
<gene>
    <name type="primary">suhB</name>
    <name type="ordered locus">Z3800</name>
    <name type="ordered locus">ECs3399</name>
</gene>
<name>SUHB_ECO57</name>